<sequence length="482" mass="53688">MIVNQALIELTKQVAVAVEEIKFSPNSTSNNSTPTNNKLKSSSSSISNCDSPSSKSKSNSSTSTPTSQPQTPSQLPQQAQQQAQQQHYSANSMNPYYAQQVLLQLQKPSTFVKHVHVVVKNTPFGITLRSKEPLQFNFQNYVIKATLLYDSDPPKMVDFIHNEPLQYVATVSEDGSEVCVDVKVGILSSQHQGSMFLVVLHISHCSAPTPSNSEPISTILTNIGNNSIHSLNVTNICVVSHPIRIVSKLDHVKKEGIPILKKRTFHEILTDKLKKLQKSQDSQSKWIKNLYQQHGAQYDMEPYNSTLHSQKTDSLCSSSTSTPSFNSTSSSSKNQSQSIKNEEEEDGGEDEEEEGGEDNDNESESSNTNSTQLIGKKSINKLPISTTTSSSNFNNLMVNNNINNNNNNNNNNHLIQNTTFSSTSHFQNSFNRVVEVYNLIPEYERVEVIRKMVQQLKSYDLEQLVSTFIDELKCGYESTIIS</sequence>
<keyword id="KW-1185">Reference proteome</keyword>
<protein>
    <recommendedName>
        <fullName>Uncharacterized protein DDB_G0270306</fullName>
    </recommendedName>
</protein>
<gene>
    <name type="ORF">DDB_G0270306</name>
</gene>
<proteinExistence type="predicted"/>
<feature type="chain" id="PRO_0000389556" description="Uncharacterized protein DDB_G0270306">
    <location>
        <begin position="1"/>
        <end position="482"/>
    </location>
</feature>
<feature type="region of interest" description="Disordered" evidence="1">
    <location>
        <begin position="24"/>
        <end position="88"/>
    </location>
</feature>
<feature type="region of interest" description="Disordered" evidence="1">
    <location>
        <begin position="307"/>
        <end position="376"/>
    </location>
</feature>
<feature type="compositionally biased region" description="Low complexity" evidence="1">
    <location>
        <begin position="24"/>
        <end position="86"/>
    </location>
</feature>
<feature type="compositionally biased region" description="Low complexity" evidence="1">
    <location>
        <begin position="312"/>
        <end position="339"/>
    </location>
</feature>
<feature type="compositionally biased region" description="Acidic residues" evidence="1">
    <location>
        <begin position="342"/>
        <end position="363"/>
    </location>
</feature>
<accession>Q55BY9</accession>
<dbReference type="EMBL" id="AAFI02000005">
    <property type="protein sequence ID" value="EAL72503.1"/>
    <property type="molecule type" value="Genomic_DNA"/>
</dbReference>
<dbReference type="RefSeq" id="XP_646692.1">
    <property type="nucleotide sequence ID" value="XM_641600.1"/>
</dbReference>
<dbReference type="SMR" id="Q55BY9"/>
<dbReference type="FunCoup" id="Q55BY9">
    <property type="interactions" value="164"/>
</dbReference>
<dbReference type="STRING" id="44689.Q55BY9"/>
<dbReference type="GlyGen" id="Q55BY9">
    <property type="glycosylation" value="2 sites"/>
</dbReference>
<dbReference type="PaxDb" id="44689-DDB0304466"/>
<dbReference type="EnsemblProtists" id="EAL72503">
    <property type="protein sequence ID" value="EAL72503"/>
    <property type="gene ID" value="DDB_G0270306"/>
</dbReference>
<dbReference type="GeneID" id="8617667"/>
<dbReference type="KEGG" id="ddi:DDB_G0270306"/>
<dbReference type="dictyBase" id="DDB_G0270306">
    <property type="gene designation" value="cdl1B"/>
</dbReference>
<dbReference type="VEuPathDB" id="AmoebaDB:DDB_G0270306"/>
<dbReference type="eggNOG" id="ENOG502RF5F">
    <property type="taxonomic scope" value="Eukaryota"/>
</dbReference>
<dbReference type="HOGENOM" id="CLU_031435_0_0_1"/>
<dbReference type="InParanoid" id="Q55BY9"/>
<dbReference type="OMA" id="PLQFNFQ"/>
<dbReference type="PRO" id="PR:Q55BY9"/>
<dbReference type="Proteomes" id="UP000002195">
    <property type="component" value="Chromosome 1"/>
</dbReference>
<dbReference type="GO" id="GO:0005634">
    <property type="term" value="C:nucleus"/>
    <property type="evidence" value="ECO:0000250"/>
    <property type="project" value="dictyBase"/>
</dbReference>
<dbReference type="GO" id="GO:0043565">
    <property type="term" value="F:sequence-specific DNA binding"/>
    <property type="evidence" value="ECO:0000250"/>
    <property type="project" value="dictyBase"/>
</dbReference>
<dbReference type="GO" id="GO:0036360">
    <property type="term" value="P:sorocarp stalk morphogenesis"/>
    <property type="evidence" value="ECO:0000315"/>
    <property type="project" value="dictyBase"/>
</dbReference>
<dbReference type="InterPro" id="IPR040430">
    <property type="entry name" value="CudA-like"/>
</dbReference>
<dbReference type="PANTHER" id="PTHR38092:SF4">
    <property type="match status" value="1"/>
</dbReference>
<dbReference type="PANTHER" id="PTHR38092">
    <property type="entry name" value="REGULATOR CUDA, PUTATIVE-RELATED"/>
    <property type="match status" value="1"/>
</dbReference>
<reference key="1">
    <citation type="journal article" date="2005" name="Nature">
        <title>The genome of the social amoeba Dictyostelium discoideum.</title>
        <authorList>
            <person name="Eichinger L."/>
            <person name="Pachebat J.A."/>
            <person name="Gloeckner G."/>
            <person name="Rajandream M.A."/>
            <person name="Sucgang R."/>
            <person name="Berriman M."/>
            <person name="Song J."/>
            <person name="Olsen R."/>
            <person name="Szafranski K."/>
            <person name="Xu Q."/>
            <person name="Tunggal B."/>
            <person name="Kummerfeld S."/>
            <person name="Madera M."/>
            <person name="Konfortov B.A."/>
            <person name="Rivero F."/>
            <person name="Bankier A.T."/>
            <person name="Lehmann R."/>
            <person name="Hamlin N."/>
            <person name="Davies R."/>
            <person name="Gaudet P."/>
            <person name="Fey P."/>
            <person name="Pilcher K."/>
            <person name="Chen G."/>
            <person name="Saunders D."/>
            <person name="Sodergren E.J."/>
            <person name="Davis P."/>
            <person name="Kerhornou A."/>
            <person name="Nie X."/>
            <person name="Hall N."/>
            <person name="Anjard C."/>
            <person name="Hemphill L."/>
            <person name="Bason N."/>
            <person name="Farbrother P."/>
            <person name="Desany B."/>
            <person name="Just E."/>
            <person name="Morio T."/>
            <person name="Rost R."/>
            <person name="Churcher C.M."/>
            <person name="Cooper J."/>
            <person name="Haydock S."/>
            <person name="van Driessche N."/>
            <person name="Cronin A."/>
            <person name="Goodhead I."/>
            <person name="Muzny D.M."/>
            <person name="Mourier T."/>
            <person name="Pain A."/>
            <person name="Lu M."/>
            <person name="Harper D."/>
            <person name="Lindsay R."/>
            <person name="Hauser H."/>
            <person name="James K.D."/>
            <person name="Quiles M."/>
            <person name="Madan Babu M."/>
            <person name="Saito T."/>
            <person name="Buchrieser C."/>
            <person name="Wardroper A."/>
            <person name="Felder M."/>
            <person name="Thangavelu M."/>
            <person name="Johnson D."/>
            <person name="Knights A."/>
            <person name="Loulseged H."/>
            <person name="Mungall K.L."/>
            <person name="Oliver K."/>
            <person name="Price C."/>
            <person name="Quail M.A."/>
            <person name="Urushihara H."/>
            <person name="Hernandez J."/>
            <person name="Rabbinowitsch E."/>
            <person name="Steffen D."/>
            <person name="Sanders M."/>
            <person name="Ma J."/>
            <person name="Kohara Y."/>
            <person name="Sharp S."/>
            <person name="Simmonds M.N."/>
            <person name="Spiegler S."/>
            <person name="Tivey A."/>
            <person name="Sugano S."/>
            <person name="White B."/>
            <person name="Walker D."/>
            <person name="Woodward J.R."/>
            <person name="Winckler T."/>
            <person name="Tanaka Y."/>
            <person name="Shaulsky G."/>
            <person name="Schleicher M."/>
            <person name="Weinstock G.M."/>
            <person name="Rosenthal A."/>
            <person name="Cox E.C."/>
            <person name="Chisholm R.L."/>
            <person name="Gibbs R.A."/>
            <person name="Loomis W.F."/>
            <person name="Platzer M."/>
            <person name="Kay R.R."/>
            <person name="Williams J.G."/>
            <person name="Dear P.H."/>
            <person name="Noegel A.A."/>
            <person name="Barrell B.G."/>
            <person name="Kuspa A."/>
        </authorList>
    </citation>
    <scope>NUCLEOTIDE SEQUENCE [LARGE SCALE GENOMIC DNA]</scope>
    <source>
        <strain>AX4</strain>
    </source>
</reference>
<name>Y0306_DICDI</name>
<evidence type="ECO:0000256" key="1">
    <source>
        <dbReference type="SAM" id="MobiDB-lite"/>
    </source>
</evidence>
<organism>
    <name type="scientific">Dictyostelium discoideum</name>
    <name type="common">Social amoeba</name>
    <dbReference type="NCBI Taxonomy" id="44689"/>
    <lineage>
        <taxon>Eukaryota</taxon>
        <taxon>Amoebozoa</taxon>
        <taxon>Evosea</taxon>
        <taxon>Eumycetozoa</taxon>
        <taxon>Dictyostelia</taxon>
        <taxon>Dictyosteliales</taxon>
        <taxon>Dictyosteliaceae</taxon>
        <taxon>Dictyostelium</taxon>
    </lineage>
</organism>